<keyword id="KW-0963">Cytoplasm</keyword>
<keyword id="KW-0507">mRNA processing</keyword>
<keyword id="KW-0539">Nucleus</keyword>
<keyword id="KW-0597">Phosphoprotein</keyword>
<keyword id="KW-1185">Reference proteome</keyword>
<gene>
    <name type="primary">DRN1</name>
    <name type="ordered locus">YGR093W</name>
</gene>
<feature type="chain" id="PRO_0000202810" description="CWF19-like protein DRN1">
    <location>
        <begin position="1"/>
        <end position="507"/>
    </location>
</feature>
<feature type="modified residue" description="Phosphoserine" evidence="4 5">
    <location>
        <position position="242"/>
    </location>
</feature>
<feature type="mutagenesis site" description="Causes accumulation of pre-mRNA splicing intermediates." evidence="2">
    <original>C</original>
    <variation>A</variation>
    <location>
        <position position="269"/>
    </location>
</feature>
<feature type="mutagenesis site" description="Causes accumulation of pre-mRNA splicing intermediates." evidence="2">
    <original>C</original>
    <variation>A</variation>
    <location>
        <position position="272"/>
    </location>
</feature>
<feature type="mutagenesis site" description="Causes accumulation of pre-mRNA splicing intermediates." evidence="2">
    <original>H</original>
    <variation>A</variation>
    <location>
        <position position="366"/>
    </location>
</feature>
<feature type="mutagenesis site" description="Causes accumulation of pre-mRNA splicing intermediates." evidence="2">
    <original>R</original>
    <variation>A</variation>
    <location>
        <position position="459"/>
    </location>
</feature>
<feature type="mutagenesis site" description="Causes accumulation of pre-mRNA splicing intermediates." evidence="2">
    <original>W</original>
    <variation>A</variation>
    <location>
        <position position="474"/>
    </location>
</feature>
<reference key="1">
    <citation type="journal article" date="1997" name="Nature">
        <title>The nucleotide sequence of Saccharomyces cerevisiae chromosome VII.</title>
        <authorList>
            <person name="Tettelin H."/>
            <person name="Agostoni-Carbone M.L."/>
            <person name="Albermann K."/>
            <person name="Albers M."/>
            <person name="Arroyo J."/>
            <person name="Backes U."/>
            <person name="Barreiros T."/>
            <person name="Bertani I."/>
            <person name="Bjourson A.J."/>
            <person name="Brueckner M."/>
            <person name="Bruschi C.V."/>
            <person name="Carignani G."/>
            <person name="Castagnoli L."/>
            <person name="Cerdan E."/>
            <person name="Clemente M.L."/>
            <person name="Coblenz A."/>
            <person name="Coglievina M."/>
            <person name="Coissac E."/>
            <person name="Defoor E."/>
            <person name="Del Bino S."/>
            <person name="Delius H."/>
            <person name="Delneri D."/>
            <person name="de Wergifosse P."/>
            <person name="Dujon B."/>
            <person name="Durand P."/>
            <person name="Entian K.-D."/>
            <person name="Eraso P."/>
            <person name="Escribano V."/>
            <person name="Fabiani L."/>
            <person name="Fartmann B."/>
            <person name="Feroli F."/>
            <person name="Feuermann M."/>
            <person name="Frontali L."/>
            <person name="Garcia-Gonzalez M."/>
            <person name="Garcia-Saez M.I."/>
            <person name="Goffeau A."/>
            <person name="Guerreiro P."/>
            <person name="Hani J."/>
            <person name="Hansen M."/>
            <person name="Hebling U."/>
            <person name="Hernandez K."/>
            <person name="Heumann K."/>
            <person name="Hilger F."/>
            <person name="Hofmann B."/>
            <person name="Indge K.J."/>
            <person name="James C.M."/>
            <person name="Klima R."/>
            <person name="Koetter P."/>
            <person name="Kramer B."/>
            <person name="Kramer W."/>
            <person name="Lauquin G."/>
            <person name="Leuther H."/>
            <person name="Louis E.J."/>
            <person name="Maillier E."/>
            <person name="Marconi A."/>
            <person name="Martegani E."/>
            <person name="Mazon M.J."/>
            <person name="Mazzoni C."/>
            <person name="McReynolds A.D.K."/>
            <person name="Melchioretto P."/>
            <person name="Mewes H.-W."/>
            <person name="Minenkova O."/>
            <person name="Mueller-Auer S."/>
            <person name="Nawrocki A."/>
            <person name="Netter P."/>
            <person name="Neu R."/>
            <person name="Nombela C."/>
            <person name="Oliver S.G."/>
            <person name="Panzeri L."/>
            <person name="Paoluzi S."/>
            <person name="Plevani P."/>
            <person name="Portetelle D."/>
            <person name="Portillo F."/>
            <person name="Potier S."/>
            <person name="Purnelle B."/>
            <person name="Rieger M."/>
            <person name="Riles L."/>
            <person name="Rinaldi T."/>
            <person name="Robben J."/>
            <person name="Rodrigues-Pousada C."/>
            <person name="Rodriguez-Belmonte E."/>
            <person name="Rodriguez-Torres A.M."/>
            <person name="Rose M."/>
            <person name="Ruzzi M."/>
            <person name="Saliola M."/>
            <person name="Sanchez-Perez M."/>
            <person name="Schaefer B."/>
            <person name="Schaefer M."/>
            <person name="Scharfe M."/>
            <person name="Schmidheini T."/>
            <person name="Schreer A."/>
            <person name="Skala J."/>
            <person name="Souciet J.-L."/>
            <person name="Steensma H.Y."/>
            <person name="Talla E."/>
            <person name="Thierry A."/>
            <person name="Vandenbol M."/>
            <person name="van der Aart Q.J.M."/>
            <person name="Van Dyck L."/>
            <person name="Vanoni M."/>
            <person name="Verhasselt P."/>
            <person name="Voet M."/>
            <person name="Volckaert G."/>
            <person name="Wambutt R."/>
            <person name="Watson M.D."/>
            <person name="Weber N."/>
            <person name="Wedler E."/>
            <person name="Wedler H."/>
            <person name="Wipfli P."/>
            <person name="Wolf K."/>
            <person name="Wright L.F."/>
            <person name="Zaccaria P."/>
            <person name="Zimmermann M."/>
            <person name="Zollner A."/>
            <person name="Kleine K."/>
        </authorList>
    </citation>
    <scope>NUCLEOTIDE SEQUENCE [LARGE SCALE GENOMIC DNA]</scope>
    <source>
        <strain>ATCC 204508 / S288c</strain>
    </source>
</reference>
<reference key="2">
    <citation type="journal article" date="2014" name="G3 (Bethesda)">
        <title>The reference genome sequence of Saccharomyces cerevisiae: Then and now.</title>
        <authorList>
            <person name="Engel S.R."/>
            <person name="Dietrich F.S."/>
            <person name="Fisk D.G."/>
            <person name="Binkley G."/>
            <person name="Balakrishnan R."/>
            <person name="Costanzo M.C."/>
            <person name="Dwight S.S."/>
            <person name="Hitz B.C."/>
            <person name="Karra K."/>
            <person name="Nash R.S."/>
            <person name="Weng S."/>
            <person name="Wong E.D."/>
            <person name="Lloyd P."/>
            <person name="Skrzypek M.S."/>
            <person name="Miyasato S.R."/>
            <person name="Simison M."/>
            <person name="Cherry J.M."/>
        </authorList>
    </citation>
    <scope>GENOME REANNOTATION</scope>
    <source>
        <strain>ATCC 204508 / S288c</strain>
    </source>
</reference>
<reference key="3">
    <citation type="journal article" date="2003" name="Nature">
        <title>Global analysis of protein localization in budding yeast.</title>
        <authorList>
            <person name="Huh W.-K."/>
            <person name="Falvo J.V."/>
            <person name="Gerke L.C."/>
            <person name="Carroll A.S."/>
            <person name="Howson R.W."/>
            <person name="Weissman J.S."/>
            <person name="O'Shea E.K."/>
        </authorList>
    </citation>
    <scope>SUBCELLULAR LOCATION [LARGE SCALE ANALYSIS]</scope>
</reference>
<reference key="4">
    <citation type="journal article" date="2003" name="Nature">
        <title>Global analysis of protein expression in yeast.</title>
        <authorList>
            <person name="Ghaemmaghami S."/>
            <person name="Huh W.-K."/>
            <person name="Bower K."/>
            <person name="Howson R.W."/>
            <person name="Belle A."/>
            <person name="Dephoure N."/>
            <person name="O'Shea E.K."/>
            <person name="Weissman J.S."/>
        </authorList>
    </citation>
    <scope>LEVEL OF PROTEIN EXPRESSION [LARGE SCALE ANALYSIS]</scope>
</reference>
<reference key="5">
    <citation type="journal article" date="2008" name="Mol. Cell. Proteomics">
        <title>A multidimensional chromatography technology for in-depth phosphoproteome analysis.</title>
        <authorList>
            <person name="Albuquerque C.P."/>
            <person name="Smolka M.B."/>
            <person name="Payne S.H."/>
            <person name="Bafna V."/>
            <person name="Eng J."/>
            <person name="Zhou H."/>
        </authorList>
    </citation>
    <scope>PHOSPHORYLATION [LARGE SCALE ANALYSIS] AT SER-242</scope>
    <scope>IDENTIFICATION BY MASS SPECTROMETRY [LARGE SCALE ANALYSIS]</scope>
</reference>
<reference key="6">
    <citation type="journal article" date="2009" name="Science">
        <title>Global analysis of Cdk1 substrate phosphorylation sites provides insights into evolution.</title>
        <authorList>
            <person name="Holt L.J."/>
            <person name="Tuch B.B."/>
            <person name="Villen J."/>
            <person name="Johnson A.D."/>
            <person name="Gygi S.P."/>
            <person name="Morgan D.O."/>
        </authorList>
    </citation>
    <scope>PHOSPHORYLATION [LARGE SCALE ANALYSIS] AT SER-242</scope>
    <scope>IDENTIFICATION BY MASS SPECTROMETRY [LARGE SCALE ANALYSIS]</scope>
</reference>
<reference key="7">
    <citation type="journal article" date="2012" name="Cell Biosci.">
        <title>The nuclear localization of SWI/SNF proteins is subjected to oxygen regulation.</title>
        <authorList>
            <person name="Dastidar R.G."/>
            <person name="Hooda J."/>
            <person name="Shah A."/>
            <person name="Cao T.M."/>
            <person name="Henke R.M."/>
            <person name="Zhang L."/>
        </authorList>
    </citation>
    <scope>SUBCELLULAR LOCATION</scope>
</reference>
<reference key="8">
    <citation type="journal article" date="2014" name="RNA">
        <title>A homolog of lariat-debranching enzyme modulates turnover of branched RNA.</title>
        <authorList>
            <person name="Garrey S.M."/>
            <person name="Katolik A."/>
            <person name="Prekeris M."/>
            <person name="Li X."/>
            <person name="York K."/>
            <person name="Bernards S."/>
            <person name="Fields S."/>
            <person name="Zhao R."/>
            <person name="Damha M.J."/>
            <person name="Hesselberth J.R."/>
        </authorList>
    </citation>
    <scope>FUNCTION</scope>
    <scope>INTERACTION WITH DBR1 AND SYF1</scope>
    <scope>DISRUPTION PHENOTYPE</scope>
    <scope>MUTAGENESIS OF CYS-269; CYS-272; HIS-366; ARG-459 AND TRP-474</scope>
</reference>
<name>DRN1_YEAST</name>
<sequence>MTNAKILVAHISESDADEAIRKIKKVNEKSGPFDLIIIFSNSYDENFELNTDGLPQLILLSCDKANNSKSKKINENVTLLHNMGTYKLANGITLSYFIYPDDTLQGEKKSILDEFGKSEDQVDILLTKEWGLSISERCGRLSGSEVVDELAKKLQARYHFAFSDEINFYELEPFQWERERLSRFLNIPKYGSGKKWAYAFNMPIGDNELKDEPEPPNLIANPYNSVVTNSNKRPLETETENSFDGDKQVLANREKNENKKIRTILPSSCHFCFSNPNLEDHMIISIGKLVYLTTAKGPLSVPKGDMDISGHCLIIPIEHIPKLDPSKNAELTQSILAYEASLVKMNYIKFDMCTIVFEIQSERSIHFHKQVIPVPKYLVLKFCSALDRQVHFNNEKFTRNAKLEFQCYDSHSSKQYVDVINNQSNNYLQFTVYETPEADPKIYLATFNASETIDLQFGRRVLAFLLNLPRRVKWNSSTCLQTKQQETIEAEKFQKAYRTYDISLTEN</sequence>
<comment type="function">
    <text evidence="2">Involved in branched RNA metabolism, modulating the turnover of lariat-intron pre-mRNAs by the lariat-debranching enzyme DBR1. Enhances the debranching activity of DBR1 in vitro.</text>
</comment>
<comment type="subunit">
    <text evidence="2">Interacts with DBR1. Interacts with SYF1, a component of the NTC complex. Interacts with lariat-introns and lariat-intermediates.</text>
</comment>
<comment type="subcellular location">
    <subcellularLocation>
        <location>Nucleus</location>
    </subcellularLocation>
    <subcellularLocation>
        <location>Cytoplasm</location>
    </subcellularLocation>
    <text>Relocalizes to the cytoplasm in response to hypoxia.</text>
</comment>
<comment type="disruption phenotype">
    <text evidence="2">Accumulates pre-mRNA splicing intermediates.</text>
</comment>
<comment type="miscellaneous">
    <text evidence="1">Present with 1270 molecules/cell in log phase SD medium.</text>
</comment>
<comment type="similarity">
    <text evidence="3">Belongs to the CWF19 family.</text>
</comment>
<organism>
    <name type="scientific">Saccharomyces cerevisiae (strain ATCC 204508 / S288c)</name>
    <name type="common">Baker's yeast</name>
    <dbReference type="NCBI Taxonomy" id="559292"/>
    <lineage>
        <taxon>Eukaryota</taxon>
        <taxon>Fungi</taxon>
        <taxon>Dikarya</taxon>
        <taxon>Ascomycota</taxon>
        <taxon>Saccharomycotina</taxon>
        <taxon>Saccharomycetes</taxon>
        <taxon>Saccharomycetales</taxon>
        <taxon>Saccharomycetaceae</taxon>
        <taxon>Saccharomyces</taxon>
    </lineage>
</organism>
<evidence type="ECO:0000269" key="1">
    <source>
    </source>
</evidence>
<evidence type="ECO:0000269" key="2">
    <source>
    </source>
</evidence>
<evidence type="ECO:0000305" key="3"/>
<evidence type="ECO:0007744" key="4">
    <source>
    </source>
</evidence>
<evidence type="ECO:0007744" key="5">
    <source>
    </source>
</evidence>
<proteinExistence type="evidence at protein level"/>
<dbReference type="EMBL" id="Z72878">
    <property type="protein sequence ID" value="CAA97096.1"/>
    <property type="molecule type" value="Genomic_DNA"/>
</dbReference>
<dbReference type="EMBL" id="BK006941">
    <property type="protein sequence ID" value="DAA08186.1"/>
    <property type="molecule type" value="Genomic_DNA"/>
</dbReference>
<dbReference type="PIR" id="S64388">
    <property type="entry name" value="S64388"/>
</dbReference>
<dbReference type="RefSeq" id="NP_011607.3">
    <property type="nucleotide sequence ID" value="NM_001181222.3"/>
</dbReference>
<dbReference type="SMR" id="P53255"/>
<dbReference type="BioGRID" id="33336">
    <property type="interactions" value="77"/>
</dbReference>
<dbReference type="FunCoup" id="P53255">
    <property type="interactions" value="1298"/>
</dbReference>
<dbReference type="IntAct" id="P53255">
    <property type="interactions" value="3"/>
</dbReference>
<dbReference type="MINT" id="P53255"/>
<dbReference type="STRING" id="4932.YGR093W"/>
<dbReference type="iPTMnet" id="P53255"/>
<dbReference type="PaxDb" id="4932-YGR093W"/>
<dbReference type="PeptideAtlas" id="P53255"/>
<dbReference type="EnsemblFungi" id="YGR093W_mRNA">
    <property type="protein sequence ID" value="YGR093W"/>
    <property type="gene ID" value="YGR093W"/>
</dbReference>
<dbReference type="GeneID" id="852985"/>
<dbReference type="KEGG" id="sce:YGR093W"/>
<dbReference type="AGR" id="SGD:S000003325"/>
<dbReference type="SGD" id="S000003325">
    <property type="gene designation" value="DRN1"/>
</dbReference>
<dbReference type="VEuPathDB" id="FungiDB:YGR093W"/>
<dbReference type="eggNOG" id="KOG2476">
    <property type="taxonomic scope" value="Eukaryota"/>
</dbReference>
<dbReference type="GeneTree" id="ENSGT00940000156000"/>
<dbReference type="HOGENOM" id="CLU_019955_0_0_1"/>
<dbReference type="InParanoid" id="P53255"/>
<dbReference type="OMA" id="FSGHCLI"/>
<dbReference type="OrthoDB" id="444325at2759"/>
<dbReference type="BioCyc" id="YEAST:G3O-30803-MONOMER"/>
<dbReference type="BioGRID-ORCS" id="852985">
    <property type="hits" value="1 hit in 10 CRISPR screens"/>
</dbReference>
<dbReference type="PRO" id="PR:P53255"/>
<dbReference type="Proteomes" id="UP000002311">
    <property type="component" value="Chromosome VII"/>
</dbReference>
<dbReference type="RNAct" id="P53255">
    <property type="molecule type" value="protein"/>
</dbReference>
<dbReference type="GO" id="GO:0005829">
    <property type="term" value="C:cytosol"/>
    <property type="evidence" value="ECO:0000314"/>
    <property type="project" value="SGD"/>
</dbReference>
<dbReference type="GO" id="GO:0005634">
    <property type="term" value="C:nucleus"/>
    <property type="evidence" value="ECO:0000314"/>
    <property type="project" value="SGD"/>
</dbReference>
<dbReference type="GO" id="GO:0071014">
    <property type="term" value="C:post-mRNA release spliceosomal complex"/>
    <property type="evidence" value="ECO:0000318"/>
    <property type="project" value="GO_Central"/>
</dbReference>
<dbReference type="GO" id="GO:0008047">
    <property type="term" value="F:enzyme activator activity"/>
    <property type="evidence" value="ECO:0000314"/>
    <property type="project" value="SGD"/>
</dbReference>
<dbReference type="GO" id="GO:0061632">
    <property type="term" value="F:RNA lariat debranching enzyme activator activity"/>
    <property type="evidence" value="ECO:0000314"/>
    <property type="project" value="SGD"/>
</dbReference>
<dbReference type="GO" id="GO:0000398">
    <property type="term" value="P:mRNA splicing, via spliceosome"/>
    <property type="evidence" value="ECO:0000315"/>
    <property type="project" value="SGD"/>
</dbReference>
<dbReference type="InterPro" id="IPR040194">
    <property type="entry name" value="Cwf19-like"/>
</dbReference>
<dbReference type="InterPro" id="IPR006768">
    <property type="entry name" value="Cwf19-like_C_dom-1"/>
</dbReference>
<dbReference type="InterPro" id="IPR006767">
    <property type="entry name" value="Cwf19-like_C_dom-2"/>
</dbReference>
<dbReference type="InterPro" id="IPR036265">
    <property type="entry name" value="HIT-like_sf"/>
</dbReference>
<dbReference type="PANTHER" id="PTHR12072">
    <property type="entry name" value="CWF19, CELL CYCLE CONTROL PROTEIN"/>
    <property type="match status" value="1"/>
</dbReference>
<dbReference type="PANTHER" id="PTHR12072:SF4">
    <property type="entry name" value="CWF19-LIKE PROTEIN 1"/>
    <property type="match status" value="1"/>
</dbReference>
<dbReference type="Pfam" id="PF04677">
    <property type="entry name" value="CwfJ_C_1"/>
    <property type="match status" value="1"/>
</dbReference>
<dbReference type="Pfam" id="PF04676">
    <property type="entry name" value="CwfJ_C_2"/>
    <property type="match status" value="1"/>
</dbReference>
<dbReference type="SUPFAM" id="SSF54197">
    <property type="entry name" value="HIT-like"/>
    <property type="match status" value="1"/>
</dbReference>
<protein>
    <recommendedName>
        <fullName>CWF19-like protein DRN1</fullName>
    </recommendedName>
    <alternativeName>
        <fullName>Debranching enzyme-associated ribonuclease 1</fullName>
    </alternativeName>
</protein>
<accession>P53255</accession>
<accession>D6VUM5</accession>